<organism>
    <name type="scientific">Haemophilus influenzae (strain 86-028NP)</name>
    <dbReference type="NCBI Taxonomy" id="281310"/>
    <lineage>
        <taxon>Bacteria</taxon>
        <taxon>Pseudomonadati</taxon>
        <taxon>Pseudomonadota</taxon>
        <taxon>Gammaproteobacteria</taxon>
        <taxon>Pasteurellales</taxon>
        <taxon>Pasteurellaceae</taxon>
        <taxon>Haemophilus</taxon>
    </lineage>
</organism>
<reference key="1">
    <citation type="journal article" date="2005" name="J. Bacteriol.">
        <title>Genomic sequence of an otitis media isolate of nontypeable Haemophilus influenzae: comparative study with H. influenzae serotype d, strain KW20.</title>
        <authorList>
            <person name="Harrison A."/>
            <person name="Dyer D.W."/>
            <person name="Gillaspy A."/>
            <person name="Ray W.C."/>
            <person name="Mungur R."/>
            <person name="Carson M.B."/>
            <person name="Zhong H."/>
            <person name="Gipson J."/>
            <person name="Gipson M."/>
            <person name="Johnson L.S."/>
            <person name="Lewis L."/>
            <person name="Bakaletz L.O."/>
            <person name="Munson R.S. Jr."/>
        </authorList>
    </citation>
    <scope>NUCLEOTIDE SEQUENCE [LARGE SCALE GENOMIC DNA]</scope>
    <source>
        <strain>86-028NP</strain>
    </source>
</reference>
<name>RLMD_HAEI8</name>
<keyword id="KW-0004">4Fe-4S</keyword>
<keyword id="KW-0408">Iron</keyword>
<keyword id="KW-0411">Iron-sulfur</keyword>
<keyword id="KW-0479">Metal-binding</keyword>
<keyword id="KW-0489">Methyltransferase</keyword>
<keyword id="KW-0698">rRNA processing</keyword>
<keyword id="KW-0949">S-adenosyl-L-methionine</keyword>
<keyword id="KW-0808">Transferase</keyword>
<gene>
    <name evidence="1" type="primary">rlmD</name>
    <name type="synonym">rumA</name>
    <name type="ordered locus">NTHI0451</name>
</gene>
<accession>Q4QNK7</accession>
<comment type="function">
    <text evidence="1">Catalyzes the formation of 5-methyl-uridine at position 1939 (m5U1939) in 23S rRNA.</text>
</comment>
<comment type="catalytic activity">
    <reaction evidence="1">
        <text>uridine(1939) in 23S rRNA + S-adenosyl-L-methionine = 5-methyluridine(1939) in 23S rRNA + S-adenosyl-L-homocysteine + H(+)</text>
        <dbReference type="Rhea" id="RHEA:42908"/>
        <dbReference type="Rhea" id="RHEA-COMP:10278"/>
        <dbReference type="Rhea" id="RHEA-COMP:10279"/>
        <dbReference type="ChEBI" id="CHEBI:15378"/>
        <dbReference type="ChEBI" id="CHEBI:57856"/>
        <dbReference type="ChEBI" id="CHEBI:59789"/>
        <dbReference type="ChEBI" id="CHEBI:65315"/>
        <dbReference type="ChEBI" id="CHEBI:74447"/>
        <dbReference type="EC" id="2.1.1.190"/>
    </reaction>
</comment>
<comment type="similarity">
    <text evidence="1">Belongs to the class I-like SAM-binding methyltransferase superfamily. RNA M5U methyltransferase family. RlmD subfamily.</text>
</comment>
<sequence length="438" mass="49864">MVLLYTPKQKTNNVQTITADILDLDYQGLGVAKINGKTWFIENALPHEKVECRILEDKRQYGHATAKKWRVKSSERLEPKCAHFMRCGGCQGQHIPIEMQRKAKQSALFKRLSKLQSEPISFQPMICGDAWAYRRRVRLSLWFNPNTKQIDMGFRQKNTNDLIPVQSCEVAEPAINYLLPKLTALLEKFSTPKQLGHIELVAADNGVAMLLRYTKNLAEIDRTLLLKFAEQEKLMLFLQSDKGIEQIYGDAPYYQFSDGIKLHFDIRDFIQVNSALNERMINTALDWLELSQQDCVLDLFCGMGNFTLPLAKRVKSAVGIEGVFEMVQKAAQNAARNQIKNIEFFQADLDQSFVEQPWANQSFNKILLDPPRSGAAFALNALCELKAEKILYVSCNPATLVRDAEILCDFGYKIEKSAVIDMFPHTGHLESITLFTTK</sequence>
<proteinExistence type="inferred from homology"/>
<dbReference type="EC" id="2.1.1.190" evidence="1"/>
<dbReference type="EMBL" id="CP000057">
    <property type="protein sequence ID" value="AAX87390.1"/>
    <property type="molecule type" value="Genomic_DNA"/>
</dbReference>
<dbReference type="RefSeq" id="WP_011271991.1">
    <property type="nucleotide sequence ID" value="NC_007146.2"/>
</dbReference>
<dbReference type="SMR" id="Q4QNK7"/>
<dbReference type="GeneID" id="93219282"/>
<dbReference type="KEGG" id="hit:NTHI0451"/>
<dbReference type="HOGENOM" id="CLU_014689_8_2_6"/>
<dbReference type="Proteomes" id="UP000002525">
    <property type="component" value="Chromosome"/>
</dbReference>
<dbReference type="GO" id="GO:0051539">
    <property type="term" value="F:4 iron, 4 sulfur cluster binding"/>
    <property type="evidence" value="ECO:0007669"/>
    <property type="project" value="UniProtKB-KW"/>
</dbReference>
<dbReference type="GO" id="GO:0005506">
    <property type="term" value="F:iron ion binding"/>
    <property type="evidence" value="ECO:0007669"/>
    <property type="project" value="UniProtKB-UniRule"/>
</dbReference>
<dbReference type="GO" id="GO:0003723">
    <property type="term" value="F:RNA binding"/>
    <property type="evidence" value="ECO:0007669"/>
    <property type="project" value="InterPro"/>
</dbReference>
<dbReference type="GO" id="GO:0070041">
    <property type="term" value="F:rRNA (uridine-C5-)-methyltransferase activity"/>
    <property type="evidence" value="ECO:0007669"/>
    <property type="project" value="UniProtKB-UniRule"/>
</dbReference>
<dbReference type="GO" id="GO:0070475">
    <property type="term" value="P:rRNA base methylation"/>
    <property type="evidence" value="ECO:0007669"/>
    <property type="project" value="TreeGrafter"/>
</dbReference>
<dbReference type="CDD" id="cd02440">
    <property type="entry name" value="AdoMet_MTases"/>
    <property type="match status" value="1"/>
</dbReference>
<dbReference type="FunFam" id="3.40.50.150:FF:000009">
    <property type="entry name" value="23S rRNA (Uracil(1939)-C(5))-methyltransferase RlmD"/>
    <property type="match status" value="1"/>
</dbReference>
<dbReference type="FunFam" id="2.40.50.1070:FF:000004">
    <property type="entry name" value="23S rRNA (uracil(1939)-C(5))-methyltransferase RlmD"/>
    <property type="match status" value="1"/>
</dbReference>
<dbReference type="FunFam" id="2.40.50.140:FF:000097">
    <property type="entry name" value="23S rRNA (uracil(1939)-C(5))-methyltransferase RlmD"/>
    <property type="match status" value="1"/>
</dbReference>
<dbReference type="Gene3D" id="2.40.50.1070">
    <property type="match status" value="1"/>
</dbReference>
<dbReference type="Gene3D" id="2.40.50.140">
    <property type="entry name" value="Nucleic acid-binding proteins"/>
    <property type="match status" value="1"/>
</dbReference>
<dbReference type="Gene3D" id="3.40.50.150">
    <property type="entry name" value="Vaccinia Virus protein VP39"/>
    <property type="match status" value="1"/>
</dbReference>
<dbReference type="HAMAP" id="MF_01010">
    <property type="entry name" value="23SrRNA_methyltr_RlmD"/>
    <property type="match status" value="1"/>
</dbReference>
<dbReference type="InterPro" id="IPR001566">
    <property type="entry name" value="23S_rRNA_MeTrfase_RlmD"/>
</dbReference>
<dbReference type="InterPro" id="IPR030390">
    <property type="entry name" value="MeTrfase_TrmA_AS"/>
</dbReference>
<dbReference type="InterPro" id="IPR030391">
    <property type="entry name" value="MeTrfase_TrmA_CS"/>
</dbReference>
<dbReference type="InterPro" id="IPR012340">
    <property type="entry name" value="NA-bd_OB-fold"/>
</dbReference>
<dbReference type="InterPro" id="IPR029063">
    <property type="entry name" value="SAM-dependent_MTases_sf"/>
</dbReference>
<dbReference type="InterPro" id="IPR002792">
    <property type="entry name" value="TRAM_dom"/>
</dbReference>
<dbReference type="InterPro" id="IPR010280">
    <property type="entry name" value="U5_MeTrfase_fam"/>
</dbReference>
<dbReference type="NCBIfam" id="NF009639">
    <property type="entry name" value="PRK13168.1"/>
    <property type="match status" value="1"/>
</dbReference>
<dbReference type="NCBIfam" id="TIGR00479">
    <property type="entry name" value="rumA"/>
    <property type="match status" value="1"/>
</dbReference>
<dbReference type="PANTHER" id="PTHR11061:SF49">
    <property type="entry name" value="23S RRNA (URACIL(1939)-C(5))-METHYLTRANSFERASE RLMD"/>
    <property type="match status" value="1"/>
</dbReference>
<dbReference type="PANTHER" id="PTHR11061">
    <property type="entry name" value="RNA M5U METHYLTRANSFERASE"/>
    <property type="match status" value="1"/>
</dbReference>
<dbReference type="Pfam" id="PF01938">
    <property type="entry name" value="TRAM"/>
    <property type="match status" value="1"/>
</dbReference>
<dbReference type="Pfam" id="PF05958">
    <property type="entry name" value="tRNA_U5-meth_tr"/>
    <property type="match status" value="1"/>
</dbReference>
<dbReference type="SUPFAM" id="SSF50249">
    <property type="entry name" value="Nucleic acid-binding proteins"/>
    <property type="match status" value="1"/>
</dbReference>
<dbReference type="SUPFAM" id="SSF53335">
    <property type="entry name" value="S-adenosyl-L-methionine-dependent methyltransferases"/>
    <property type="match status" value="1"/>
</dbReference>
<dbReference type="PROSITE" id="PS51687">
    <property type="entry name" value="SAM_MT_RNA_M5U"/>
    <property type="match status" value="1"/>
</dbReference>
<dbReference type="PROSITE" id="PS50926">
    <property type="entry name" value="TRAM"/>
    <property type="match status" value="1"/>
</dbReference>
<dbReference type="PROSITE" id="PS01230">
    <property type="entry name" value="TRMA_1"/>
    <property type="match status" value="1"/>
</dbReference>
<dbReference type="PROSITE" id="PS01231">
    <property type="entry name" value="TRMA_2"/>
    <property type="match status" value="1"/>
</dbReference>
<protein>
    <recommendedName>
        <fullName evidence="1">23S rRNA (uracil(1939)-C(5))-methyltransferase RlmD</fullName>
        <ecNumber evidence="1">2.1.1.190</ecNumber>
    </recommendedName>
    <alternativeName>
        <fullName evidence="1">23S rRNA(m5U1939)-methyltransferase</fullName>
    </alternativeName>
</protein>
<feature type="chain" id="PRO_0000229873" description="23S rRNA (uracil(1939)-C(5))-methyltransferase RlmD">
    <location>
        <begin position="1"/>
        <end position="438"/>
    </location>
</feature>
<feature type="domain" description="TRAM" evidence="1">
    <location>
        <begin position="8"/>
        <end position="68"/>
    </location>
</feature>
<feature type="active site" description="Nucleophile" evidence="1">
    <location>
        <position position="395"/>
    </location>
</feature>
<feature type="binding site" evidence="1">
    <location>
        <position position="81"/>
    </location>
    <ligand>
        <name>[4Fe-4S] cluster</name>
        <dbReference type="ChEBI" id="CHEBI:49883"/>
    </ligand>
</feature>
<feature type="binding site" evidence="1">
    <location>
        <position position="87"/>
    </location>
    <ligand>
        <name>[4Fe-4S] cluster</name>
        <dbReference type="ChEBI" id="CHEBI:49883"/>
    </ligand>
</feature>
<feature type="binding site" evidence="1">
    <location>
        <position position="90"/>
    </location>
    <ligand>
        <name>[4Fe-4S] cluster</name>
        <dbReference type="ChEBI" id="CHEBI:49883"/>
    </ligand>
</feature>
<feature type="binding site" evidence="1">
    <location>
        <position position="168"/>
    </location>
    <ligand>
        <name>[4Fe-4S] cluster</name>
        <dbReference type="ChEBI" id="CHEBI:49883"/>
    </ligand>
</feature>
<feature type="binding site" evidence="1">
    <location>
        <position position="271"/>
    </location>
    <ligand>
        <name>S-adenosyl-L-methionine</name>
        <dbReference type="ChEBI" id="CHEBI:59789"/>
    </ligand>
</feature>
<feature type="binding site" evidence="1">
    <location>
        <position position="300"/>
    </location>
    <ligand>
        <name>S-adenosyl-L-methionine</name>
        <dbReference type="ChEBI" id="CHEBI:59789"/>
    </ligand>
</feature>
<feature type="binding site" evidence="1">
    <location>
        <position position="305"/>
    </location>
    <ligand>
        <name>S-adenosyl-L-methionine</name>
        <dbReference type="ChEBI" id="CHEBI:59789"/>
    </ligand>
</feature>
<feature type="binding site" evidence="1">
    <location>
        <position position="321"/>
    </location>
    <ligand>
        <name>S-adenosyl-L-methionine</name>
        <dbReference type="ChEBI" id="CHEBI:59789"/>
    </ligand>
</feature>
<feature type="binding site" evidence="1">
    <location>
        <position position="348"/>
    </location>
    <ligand>
        <name>S-adenosyl-L-methionine</name>
        <dbReference type="ChEBI" id="CHEBI:59789"/>
    </ligand>
</feature>
<feature type="binding site" evidence="1">
    <location>
        <position position="369"/>
    </location>
    <ligand>
        <name>S-adenosyl-L-methionine</name>
        <dbReference type="ChEBI" id="CHEBI:59789"/>
    </ligand>
</feature>
<evidence type="ECO:0000255" key="1">
    <source>
        <dbReference type="HAMAP-Rule" id="MF_01010"/>
    </source>
</evidence>